<keyword id="KW-0067">ATP-binding</keyword>
<keyword id="KW-0436">Ligase</keyword>
<keyword id="KW-0547">Nucleotide-binding</keyword>
<keyword id="KW-0648">Protein biosynthesis</keyword>
<organism>
    <name type="scientific">Campylobacter fetus subsp. fetus (strain 82-40)</name>
    <dbReference type="NCBI Taxonomy" id="360106"/>
    <lineage>
        <taxon>Bacteria</taxon>
        <taxon>Pseudomonadati</taxon>
        <taxon>Campylobacterota</taxon>
        <taxon>Epsilonproteobacteria</taxon>
        <taxon>Campylobacterales</taxon>
        <taxon>Campylobacteraceae</taxon>
        <taxon>Campylobacter</taxon>
    </lineage>
</organism>
<name>GATA_CAMFF</name>
<reference key="1">
    <citation type="submission" date="2006-11" db="EMBL/GenBank/DDBJ databases">
        <title>Sequence of Campylobacter fetus subsp. fetus 82-40.</title>
        <authorList>
            <person name="Fouts D.E."/>
            <person name="Nelson K.E."/>
        </authorList>
    </citation>
    <scope>NUCLEOTIDE SEQUENCE [LARGE SCALE GENOMIC DNA]</scope>
    <source>
        <strain>82-40</strain>
    </source>
</reference>
<accession>A0RNK4</accession>
<gene>
    <name evidence="1" type="primary">gatA</name>
    <name type="ordered locus">CFF8240_0611</name>
</gene>
<feature type="chain" id="PRO_1000015816" description="Glutamyl-tRNA(Gln) amidotransferase subunit A">
    <location>
        <begin position="1"/>
        <end position="453"/>
    </location>
</feature>
<feature type="active site" description="Charge relay system" evidence="1">
    <location>
        <position position="56"/>
    </location>
</feature>
<feature type="active site" description="Charge relay system" evidence="1">
    <location>
        <position position="131"/>
    </location>
</feature>
<feature type="active site" description="Acyl-ester intermediate" evidence="1">
    <location>
        <position position="155"/>
    </location>
</feature>
<proteinExistence type="inferred from homology"/>
<protein>
    <recommendedName>
        <fullName evidence="1">Glutamyl-tRNA(Gln) amidotransferase subunit A</fullName>
        <shortName evidence="1">Glu-ADT subunit A</shortName>
        <ecNumber evidence="1">6.3.5.7</ecNumber>
    </recommendedName>
</protein>
<sequence>MISLKDAIKLSSSDIVKLRKNLKDKIKDNRQLGAYIEQLTNSDISDEYAGVPIAIKDNIQVKNWSITSCSKILQGYVAPYHATVVEKLLKAGLAPFGRTNMDEFAMGSTTESSFYGKTLNPLDHTRVPGGSSGGSAAAVSAGLAIAALGSDTGGSIRQPAAFCGCVGFKPTYGRVSRYGLGAYSSSLDQIGPITRSVEDAALLYDIIAGHDPKDSTSSNLENISTSDKLNSDRKLTIAVIKNYVDGASQDVKDSLYKVVDKLKEAGHNIIYKDLSNSKYDIAAYYIIATAEASANLSRYDGVRYGRRADSNSLGQMYSKTRGEGFGVEVQRRMLLGTFVLSSGYYDAYYIKAQKARAFIKLEYEEILNEADIMLMPVAPSVAYKFGELSDPLSAYLSDIYTIGVNLAGLPAITVPVQSDKNGLNISAQLIGGAWKEQDVLDAAFGLEKLVKGN</sequence>
<evidence type="ECO:0000255" key="1">
    <source>
        <dbReference type="HAMAP-Rule" id="MF_00120"/>
    </source>
</evidence>
<dbReference type="EC" id="6.3.5.7" evidence="1"/>
<dbReference type="EMBL" id="CP000487">
    <property type="protein sequence ID" value="ABK81953.1"/>
    <property type="molecule type" value="Genomic_DNA"/>
</dbReference>
<dbReference type="RefSeq" id="WP_002849009.1">
    <property type="nucleotide sequence ID" value="NC_008599.1"/>
</dbReference>
<dbReference type="SMR" id="A0RNK4"/>
<dbReference type="GeneID" id="61064456"/>
<dbReference type="KEGG" id="cff:CFF8240_0611"/>
<dbReference type="eggNOG" id="COG0154">
    <property type="taxonomic scope" value="Bacteria"/>
</dbReference>
<dbReference type="HOGENOM" id="CLU_009600_0_3_7"/>
<dbReference type="Proteomes" id="UP000000760">
    <property type="component" value="Chromosome"/>
</dbReference>
<dbReference type="GO" id="GO:0030956">
    <property type="term" value="C:glutamyl-tRNA(Gln) amidotransferase complex"/>
    <property type="evidence" value="ECO:0007669"/>
    <property type="project" value="InterPro"/>
</dbReference>
<dbReference type="GO" id="GO:0005524">
    <property type="term" value="F:ATP binding"/>
    <property type="evidence" value="ECO:0007669"/>
    <property type="project" value="UniProtKB-KW"/>
</dbReference>
<dbReference type="GO" id="GO:0050567">
    <property type="term" value="F:glutaminyl-tRNA synthase (glutamine-hydrolyzing) activity"/>
    <property type="evidence" value="ECO:0007669"/>
    <property type="project" value="UniProtKB-UniRule"/>
</dbReference>
<dbReference type="GO" id="GO:0006412">
    <property type="term" value="P:translation"/>
    <property type="evidence" value="ECO:0007669"/>
    <property type="project" value="UniProtKB-UniRule"/>
</dbReference>
<dbReference type="Gene3D" id="3.90.1300.10">
    <property type="entry name" value="Amidase signature (AS) domain"/>
    <property type="match status" value="1"/>
</dbReference>
<dbReference type="HAMAP" id="MF_00120">
    <property type="entry name" value="GatA"/>
    <property type="match status" value="1"/>
</dbReference>
<dbReference type="InterPro" id="IPR000120">
    <property type="entry name" value="Amidase"/>
</dbReference>
<dbReference type="InterPro" id="IPR020556">
    <property type="entry name" value="Amidase_CS"/>
</dbReference>
<dbReference type="InterPro" id="IPR023631">
    <property type="entry name" value="Amidase_dom"/>
</dbReference>
<dbReference type="InterPro" id="IPR036928">
    <property type="entry name" value="AS_sf"/>
</dbReference>
<dbReference type="InterPro" id="IPR004412">
    <property type="entry name" value="GatA"/>
</dbReference>
<dbReference type="NCBIfam" id="TIGR00132">
    <property type="entry name" value="gatA"/>
    <property type="match status" value="1"/>
</dbReference>
<dbReference type="PANTHER" id="PTHR11895:SF151">
    <property type="entry name" value="GLUTAMYL-TRNA(GLN) AMIDOTRANSFERASE SUBUNIT A"/>
    <property type="match status" value="1"/>
</dbReference>
<dbReference type="PANTHER" id="PTHR11895">
    <property type="entry name" value="TRANSAMIDASE"/>
    <property type="match status" value="1"/>
</dbReference>
<dbReference type="Pfam" id="PF01425">
    <property type="entry name" value="Amidase"/>
    <property type="match status" value="1"/>
</dbReference>
<dbReference type="SUPFAM" id="SSF75304">
    <property type="entry name" value="Amidase signature (AS) enzymes"/>
    <property type="match status" value="1"/>
</dbReference>
<dbReference type="PROSITE" id="PS00571">
    <property type="entry name" value="AMIDASES"/>
    <property type="match status" value="1"/>
</dbReference>
<comment type="function">
    <text evidence="1">Allows the formation of correctly charged Gln-tRNA(Gln) through the transamidation of misacylated Glu-tRNA(Gln) in organisms which lack glutaminyl-tRNA synthetase. The reaction takes place in the presence of glutamine and ATP through an activated gamma-phospho-Glu-tRNA(Gln).</text>
</comment>
<comment type="catalytic activity">
    <reaction evidence="1">
        <text>L-glutamyl-tRNA(Gln) + L-glutamine + ATP + H2O = L-glutaminyl-tRNA(Gln) + L-glutamate + ADP + phosphate + H(+)</text>
        <dbReference type="Rhea" id="RHEA:17521"/>
        <dbReference type="Rhea" id="RHEA-COMP:9681"/>
        <dbReference type="Rhea" id="RHEA-COMP:9684"/>
        <dbReference type="ChEBI" id="CHEBI:15377"/>
        <dbReference type="ChEBI" id="CHEBI:15378"/>
        <dbReference type="ChEBI" id="CHEBI:29985"/>
        <dbReference type="ChEBI" id="CHEBI:30616"/>
        <dbReference type="ChEBI" id="CHEBI:43474"/>
        <dbReference type="ChEBI" id="CHEBI:58359"/>
        <dbReference type="ChEBI" id="CHEBI:78520"/>
        <dbReference type="ChEBI" id="CHEBI:78521"/>
        <dbReference type="ChEBI" id="CHEBI:456216"/>
        <dbReference type="EC" id="6.3.5.7"/>
    </reaction>
</comment>
<comment type="subunit">
    <text evidence="1">Heterotrimer of A, B and C subunits.</text>
</comment>
<comment type="similarity">
    <text evidence="1">Belongs to the amidase family. GatA subfamily.</text>
</comment>